<proteinExistence type="inferred from homology"/>
<comment type="function">
    <text evidence="1">The glycine cleavage system catalyzes the degradation of glycine. The P protein binds the alpha-amino group of glycine through its pyridoxal phosphate cofactor; CO(2) is released and the remaining methylamine moiety is then transferred to the lipoamide cofactor of the H protein.</text>
</comment>
<comment type="catalytic activity">
    <reaction evidence="1">
        <text>N(6)-[(R)-lipoyl]-L-lysyl-[glycine-cleavage complex H protein] + glycine + H(+) = N(6)-[(R)-S(8)-aminomethyldihydrolipoyl]-L-lysyl-[glycine-cleavage complex H protein] + CO2</text>
        <dbReference type="Rhea" id="RHEA:24304"/>
        <dbReference type="Rhea" id="RHEA-COMP:10494"/>
        <dbReference type="Rhea" id="RHEA-COMP:10495"/>
        <dbReference type="ChEBI" id="CHEBI:15378"/>
        <dbReference type="ChEBI" id="CHEBI:16526"/>
        <dbReference type="ChEBI" id="CHEBI:57305"/>
        <dbReference type="ChEBI" id="CHEBI:83099"/>
        <dbReference type="ChEBI" id="CHEBI:83143"/>
        <dbReference type="EC" id="1.4.4.2"/>
    </reaction>
</comment>
<comment type="cofactor">
    <cofactor evidence="1">
        <name>pyridoxal 5'-phosphate</name>
        <dbReference type="ChEBI" id="CHEBI:597326"/>
    </cofactor>
</comment>
<comment type="subunit">
    <text evidence="1">The glycine cleavage system is composed of four proteins: P, T, L and H. In this organism, the P 'protein' is a heterodimer of two subunits.</text>
</comment>
<comment type="similarity">
    <text evidence="1">Belongs to the GcvP family. C-terminal subunit subfamily.</text>
</comment>
<keyword id="KW-0560">Oxidoreductase</keyword>
<keyword id="KW-0663">Pyridoxal phosphate</keyword>
<keyword id="KW-1185">Reference proteome</keyword>
<sequence>MFRQAKWDEPLIFELSRPGRVGYTLPKPIEDIKVDIPEKLRRKSKLELPELSEPEIVKHYTRLSEMNYGVDSGIYPLGSCTMKYNPKINEEIATHPKVAYIHPYQDERTVQGALAIMWELEQWLKEITGMDRFTLQPAAGANGEFTGVMIIRAYHLDNGEPQRNEMLVPDSAHGTNPASAAMAGFKVIEIPSNENGTIDLEALENAVSERTAGLMLTNPNTLGIFEDEIVEIAKIIHKAGGLLYYDGANLNGILGKIRPGDMGFDIVHLNLHKTFSTPHGGGGPGAGPVGVKEFLKDYLPVPLVSYDEKSGRYYLDYNVPKSIGKVKELYGNFAVLVRALTYLKIMGRDGLREVSEIAVLNANYLTQKLKGTRGYSLPGKELRKHEVVFSAEPMKKETGVKALDVAKRLLDFGMHAPTIYFPLIVHEALMIEPTETVSKEELDAYVEALKRISEEAYTNPEIVKSAPHNTAVKRVDDVLAAKKPIVTWRMYKELKEKGEVDY</sequence>
<dbReference type="EC" id="1.4.4.2" evidence="1"/>
<dbReference type="EMBL" id="AE009950">
    <property type="protein sequence ID" value="AAL82124.1"/>
    <property type="molecule type" value="Genomic_DNA"/>
</dbReference>
<dbReference type="RefSeq" id="WP_011013144.1">
    <property type="nucleotide sequence ID" value="NC_003413.1"/>
</dbReference>
<dbReference type="SMR" id="Q8TZJ2"/>
<dbReference type="STRING" id="186497.PF2000"/>
<dbReference type="PaxDb" id="186497-PF2000"/>
<dbReference type="GeneID" id="41713824"/>
<dbReference type="KEGG" id="pfu:PF2000"/>
<dbReference type="PATRIC" id="fig|186497.12.peg.2076"/>
<dbReference type="eggNOG" id="arCOG00076">
    <property type="taxonomic scope" value="Archaea"/>
</dbReference>
<dbReference type="HOGENOM" id="CLU_004620_5_0_2"/>
<dbReference type="OrthoDB" id="371967at2157"/>
<dbReference type="PhylomeDB" id="Q8TZJ2"/>
<dbReference type="Proteomes" id="UP000001013">
    <property type="component" value="Chromosome"/>
</dbReference>
<dbReference type="GO" id="GO:0005829">
    <property type="term" value="C:cytosol"/>
    <property type="evidence" value="ECO:0007669"/>
    <property type="project" value="TreeGrafter"/>
</dbReference>
<dbReference type="GO" id="GO:0005960">
    <property type="term" value="C:glycine cleavage complex"/>
    <property type="evidence" value="ECO:0007669"/>
    <property type="project" value="TreeGrafter"/>
</dbReference>
<dbReference type="GO" id="GO:0016594">
    <property type="term" value="F:glycine binding"/>
    <property type="evidence" value="ECO:0007669"/>
    <property type="project" value="TreeGrafter"/>
</dbReference>
<dbReference type="GO" id="GO:0004375">
    <property type="term" value="F:glycine dehydrogenase (decarboxylating) activity"/>
    <property type="evidence" value="ECO:0007669"/>
    <property type="project" value="UniProtKB-EC"/>
</dbReference>
<dbReference type="GO" id="GO:0030170">
    <property type="term" value="F:pyridoxal phosphate binding"/>
    <property type="evidence" value="ECO:0007669"/>
    <property type="project" value="TreeGrafter"/>
</dbReference>
<dbReference type="GO" id="GO:0019464">
    <property type="term" value="P:glycine decarboxylation via glycine cleavage system"/>
    <property type="evidence" value="ECO:0007669"/>
    <property type="project" value="UniProtKB-UniRule"/>
</dbReference>
<dbReference type="CDD" id="cd00613">
    <property type="entry name" value="GDC-P"/>
    <property type="match status" value="1"/>
</dbReference>
<dbReference type="FunFam" id="3.40.640.10:FF:000034">
    <property type="entry name" value="Probable glycine dehydrogenase (decarboxylating) subunit 2"/>
    <property type="match status" value="1"/>
</dbReference>
<dbReference type="FunFam" id="3.90.1150.10:FF:000014">
    <property type="entry name" value="Probable glycine dehydrogenase (decarboxylating) subunit 2"/>
    <property type="match status" value="1"/>
</dbReference>
<dbReference type="Gene3D" id="6.20.440.10">
    <property type="match status" value="1"/>
</dbReference>
<dbReference type="Gene3D" id="3.90.1150.10">
    <property type="entry name" value="Aspartate Aminotransferase, domain 1"/>
    <property type="match status" value="1"/>
</dbReference>
<dbReference type="Gene3D" id="3.40.640.10">
    <property type="entry name" value="Type I PLP-dependent aspartate aminotransferase-like (Major domain)"/>
    <property type="match status" value="1"/>
</dbReference>
<dbReference type="HAMAP" id="MF_00713">
    <property type="entry name" value="GcvPB"/>
    <property type="match status" value="1"/>
</dbReference>
<dbReference type="InterPro" id="IPR023012">
    <property type="entry name" value="GcvPB"/>
</dbReference>
<dbReference type="InterPro" id="IPR049316">
    <property type="entry name" value="GDC-P_C"/>
</dbReference>
<dbReference type="InterPro" id="IPR049315">
    <property type="entry name" value="GDC-P_N"/>
</dbReference>
<dbReference type="InterPro" id="IPR020581">
    <property type="entry name" value="GDC_P"/>
</dbReference>
<dbReference type="InterPro" id="IPR015424">
    <property type="entry name" value="PyrdxlP-dep_Trfase"/>
</dbReference>
<dbReference type="InterPro" id="IPR015421">
    <property type="entry name" value="PyrdxlP-dep_Trfase_major"/>
</dbReference>
<dbReference type="InterPro" id="IPR015422">
    <property type="entry name" value="PyrdxlP-dep_Trfase_small"/>
</dbReference>
<dbReference type="NCBIfam" id="NF003346">
    <property type="entry name" value="PRK04366.1"/>
    <property type="match status" value="1"/>
</dbReference>
<dbReference type="PANTHER" id="PTHR11773:SF1">
    <property type="entry name" value="GLYCINE DEHYDROGENASE (DECARBOXYLATING), MITOCHONDRIAL"/>
    <property type="match status" value="1"/>
</dbReference>
<dbReference type="PANTHER" id="PTHR11773">
    <property type="entry name" value="GLYCINE DEHYDROGENASE, DECARBOXYLATING"/>
    <property type="match status" value="1"/>
</dbReference>
<dbReference type="Pfam" id="PF21478">
    <property type="entry name" value="GcvP2_C"/>
    <property type="match status" value="1"/>
</dbReference>
<dbReference type="Pfam" id="PF02347">
    <property type="entry name" value="GDC-P"/>
    <property type="match status" value="1"/>
</dbReference>
<dbReference type="SUPFAM" id="SSF53383">
    <property type="entry name" value="PLP-dependent transferases"/>
    <property type="match status" value="1"/>
</dbReference>
<evidence type="ECO:0000255" key="1">
    <source>
        <dbReference type="HAMAP-Rule" id="MF_00713"/>
    </source>
</evidence>
<reference key="1">
    <citation type="journal article" date="1999" name="Genetics">
        <title>Divergence of the hyperthermophilic archaea Pyrococcus furiosus and P. horikoshii inferred from complete genomic sequences.</title>
        <authorList>
            <person name="Maeder D.L."/>
            <person name="Weiss R.B."/>
            <person name="Dunn D.M."/>
            <person name="Cherry J.L."/>
            <person name="Gonzalez J.M."/>
            <person name="DiRuggiero J."/>
            <person name="Robb F.T."/>
        </authorList>
    </citation>
    <scope>NUCLEOTIDE SEQUENCE [LARGE SCALE GENOMIC DNA]</scope>
    <source>
        <strain>ATCC 43587 / DSM 3638 / JCM 8422 / Vc1</strain>
    </source>
</reference>
<feature type="chain" id="PRO_0000167028" description="Probable glycine dehydrogenase (decarboxylating) subunit 2">
    <location>
        <begin position="1"/>
        <end position="502"/>
    </location>
</feature>
<feature type="modified residue" description="N6-(pyridoxal phosphate)lysine" evidence="1">
    <location>
        <position position="273"/>
    </location>
</feature>
<name>GCSPB_PYRFU</name>
<organism>
    <name type="scientific">Pyrococcus furiosus (strain ATCC 43587 / DSM 3638 / JCM 8422 / Vc1)</name>
    <dbReference type="NCBI Taxonomy" id="186497"/>
    <lineage>
        <taxon>Archaea</taxon>
        <taxon>Methanobacteriati</taxon>
        <taxon>Methanobacteriota</taxon>
        <taxon>Thermococci</taxon>
        <taxon>Thermococcales</taxon>
        <taxon>Thermococcaceae</taxon>
        <taxon>Pyrococcus</taxon>
    </lineage>
</organism>
<accession>Q8TZJ2</accession>
<protein>
    <recommendedName>
        <fullName evidence="1">Probable glycine dehydrogenase (decarboxylating) subunit 2</fullName>
        <ecNumber evidence="1">1.4.4.2</ecNumber>
    </recommendedName>
    <alternativeName>
        <fullName evidence="1">Glycine cleavage system P-protein subunit 2</fullName>
    </alternativeName>
    <alternativeName>
        <fullName evidence="1">Glycine decarboxylase subunit 2</fullName>
    </alternativeName>
    <alternativeName>
        <fullName evidence="1">Glycine dehydrogenase (aminomethyl-transferring) subunit 2</fullName>
    </alternativeName>
</protein>
<gene>
    <name evidence="1" type="primary">gcvPB</name>
    <name type="ordered locus">PF2000</name>
</gene>